<protein>
    <recommendedName>
        <fullName evidence="1">Elongation factor P--(R)-beta-lysine ligase</fullName>
        <shortName evidence="1">EF-P--(R)-beta-lysine ligase</shortName>
        <ecNumber evidence="1">6.3.2.-</ecNumber>
    </recommendedName>
    <alternativeName>
        <fullName evidence="1">EF-P post-translational modification enzyme A</fullName>
    </alternativeName>
    <alternativeName>
        <fullName evidence="1">EF-P-lysine lysyltransferase</fullName>
    </alternativeName>
</protein>
<accession>B1LQH8</accession>
<comment type="function">
    <text evidence="1">With EpmB is involved in the beta-lysylation step of the post-translational modification of translation elongation factor P (EF-P) on 'Lys-34'. Catalyzes the ATP-dependent activation of (R)-beta-lysine produced by EpmB, forming a lysyl-adenylate, from which the beta-lysyl moiety is then transferred to the epsilon-amino group of EF-P 'Lys-34'.</text>
</comment>
<comment type="catalytic activity">
    <reaction evidence="1">
        <text>D-beta-lysine + L-lysyl-[protein] + ATP = N(6)-((3R)-3,6-diaminohexanoyl)-L-lysyl-[protein] + AMP + diphosphate + H(+)</text>
        <dbReference type="Rhea" id="RHEA:83435"/>
        <dbReference type="Rhea" id="RHEA-COMP:9752"/>
        <dbReference type="Rhea" id="RHEA-COMP:20131"/>
        <dbReference type="ChEBI" id="CHEBI:15378"/>
        <dbReference type="ChEBI" id="CHEBI:29969"/>
        <dbReference type="ChEBI" id="CHEBI:30616"/>
        <dbReference type="ChEBI" id="CHEBI:33019"/>
        <dbReference type="ChEBI" id="CHEBI:84138"/>
        <dbReference type="ChEBI" id="CHEBI:156053"/>
        <dbReference type="ChEBI" id="CHEBI:456215"/>
    </reaction>
    <physiologicalReaction direction="left-to-right" evidence="1">
        <dbReference type="Rhea" id="RHEA:83436"/>
    </physiologicalReaction>
</comment>
<comment type="subunit">
    <text evidence="1">Homodimer.</text>
</comment>
<comment type="similarity">
    <text evidence="1">Belongs to the class-II aminoacyl-tRNA synthetase family. EpmA subfamily.</text>
</comment>
<reference key="1">
    <citation type="journal article" date="2008" name="J. Bacteriol.">
        <title>Insights into the environmental resistance gene pool from the genome sequence of the multidrug-resistant environmental isolate Escherichia coli SMS-3-5.</title>
        <authorList>
            <person name="Fricke W.F."/>
            <person name="Wright M.S."/>
            <person name="Lindell A.H."/>
            <person name="Harkins D.M."/>
            <person name="Baker-Austin C."/>
            <person name="Ravel J."/>
            <person name="Stepanauskas R."/>
        </authorList>
    </citation>
    <scope>NUCLEOTIDE SEQUENCE [LARGE SCALE GENOMIC DNA]</scope>
    <source>
        <strain>SMS-3-5 / SECEC</strain>
    </source>
</reference>
<name>EPMA_ECOSM</name>
<sequence>MSETASWQPSASIPNLLKRAAIMAEIRRFFADRGVLEVETPCMSQATVTDIHLVPFETRFVGPGHSQGMNLWLMTSPEYHMKRLLVAGCGPVFQLCRSFRNEEMGRYHNPEFTMLEWYRPHYDMYRLMNEVDDLLQQVLDCPAAESLSYQQAFLRYLEIDPLSADKTQLREVAAKLDLSNVADTEEDRDTLLQLLFTFGVEPNIGKEKPTFVYHFPASQASLAQISTEDHRVAERFEVYYKGIELANGFHELTDAREQQQRFEQDNRKRAARGLPQHPIDQNLIEALKVGMPDCSGVALGVDRLVMLALGAETLAEVIAFSVDRA</sequence>
<gene>
    <name evidence="1" type="primary">epmA</name>
    <name type="synonym">yjeA</name>
    <name type="ordered locus">EcSMS35_4626</name>
</gene>
<feature type="chain" id="PRO_1000199255" description="Elongation factor P--(R)-beta-lysine ligase">
    <location>
        <begin position="1"/>
        <end position="325"/>
    </location>
</feature>
<feature type="binding site" evidence="1">
    <location>
        <begin position="76"/>
        <end position="78"/>
    </location>
    <ligand>
        <name>substrate</name>
    </ligand>
</feature>
<feature type="binding site" evidence="1">
    <location>
        <begin position="100"/>
        <end position="102"/>
    </location>
    <ligand>
        <name>ATP</name>
        <dbReference type="ChEBI" id="CHEBI:30616"/>
    </ligand>
</feature>
<feature type="binding site" evidence="1">
    <location>
        <position position="109"/>
    </location>
    <ligand>
        <name>ATP</name>
        <dbReference type="ChEBI" id="CHEBI:30616"/>
    </ligand>
</feature>
<feature type="binding site" evidence="1">
    <location>
        <position position="118"/>
    </location>
    <ligand>
        <name>substrate</name>
    </ligand>
</feature>
<feature type="binding site" evidence="1">
    <location>
        <begin position="244"/>
        <end position="245"/>
    </location>
    <ligand>
        <name>ATP</name>
        <dbReference type="ChEBI" id="CHEBI:30616"/>
    </ligand>
</feature>
<feature type="binding site" evidence="1">
    <location>
        <position position="251"/>
    </location>
    <ligand>
        <name>substrate</name>
    </ligand>
</feature>
<feature type="binding site" evidence="1">
    <location>
        <position position="300"/>
    </location>
    <ligand>
        <name>ATP</name>
        <dbReference type="ChEBI" id="CHEBI:30616"/>
    </ligand>
</feature>
<dbReference type="EC" id="6.3.2.-" evidence="1"/>
<dbReference type="EMBL" id="CP000970">
    <property type="protein sequence ID" value="ACB19932.1"/>
    <property type="molecule type" value="Genomic_DNA"/>
</dbReference>
<dbReference type="RefSeq" id="WP_000004771.1">
    <property type="nucleotide sequence ID" value="NC_010498.1"/>
</dbReference>
<dbReference type="SMR" id="B1LQH8"/>
<dbReference type="GeneID" id="93777667"/>
<dbReference type="KEGG" id="ecm:EcSMS35_4626"/>
<dbReference type="HOGENOM" id="CLU_008255_1_1_6"/>
<dbReference type="Proteomes" id="UP000007011">
    <property type="component" value="Chromosome"/>
</dbReference>
<dbReference type="GO" id="GO:0005829">
    <property type="term" value="C:cytosol"/>
    <property type="evidence" value="ECO:0007669"/>
    <property type="project" value="TreeGrafter"/>
</dbReference>
<dbReference type="GO" id="GO:0016880">
    <property type="term" value="F:acid-ammonia (or amide) ligase activity"/>
    <property type="evidence" value="ECO:0007669"/>
    <property type="project" value="UniProtKB-UniRule"/>
</dbReference>
<dbReference type="GO" id="GO:0005524">
    <property type="term" value="F:ATP binding"/>
    <property type="evidence" value="ECO:0007669"/>
    <property type="project" value="UniProtKB-UniRule"/>
</dbReference>
<dbReference type="GO" id="GO:0004824">
    <property type="term" value="F:lysine-tRNA ligase activity"/>
    <property type="evidence" value="ECO:0007669"/>
    <property type="project" value="InterPro"/>
</dbReference>
<dbReference type="GO" id="GO:0000049">
    <property type="term" value="F:tRNA binding"/>
    <property type="evidence" value="ECO:0007669"/>
    <property type="project" value="TreeGrafter"/>
</dbReference>
<dbReference type="GO" id="GO:0006430">
    <property type="term" value="P:lysyl-tRNA aminoacylation"/>
    <property type="evidence" value="ECO:0007669"/>
    <property type="project" value="InterPro"/>
</dbReference>
<dbReference type="FunFam" id="3.30.930.10:FF:000017">
    <property type="entry name" value="Elongation factor P--(R)-beta-lysine ligase"/>
    <property type="match status" value="1"/>
</dbReference>
<dbReference type="Gene3D" id="3.30.930.10">
    <property type="entry name" value="Bira Bifunctional Protein, Domain 2"/>
    <property type="match status" value="1"/>
</dbReference>
<dbReference type="HAMAP" id="MF_00174">
    <property type="entry name" value="EF_P_modif_A"/>
    <property type="match status" value="1"/>
</dbReference>
<dbReference type="InterPro" id="IPR004364">
    <property type="entry name" value="Aa-tRNA-synt_II"/>
</dbReference>
<dbReference type="InterPro" id="IPR006195">
    <property type="entry name" value="aa-tRNA-synth_II"/>
</dbReference>
<dbReference type="InterPro" id="IPR045864">
    <property type="entry name" value="aa-tRNA-synth_II/BPL/LPL"/>
</dbReference>
<dbReference type="InterPro" id="IPR004525">
    <property type="entry name" value="EpmA"/>
</dbReference>
<dbReference type="InterPro" id="IPR018149">
    <property type="entry name" value="Lys-tRNA-synth_II_C"/>
</dbReference>
<dbReference type="NCBIfam" id="TIGR00462">
    <property type="entry name" value="genX"/>
    <property type="match status" value="1"/>
</dbReference>
<dbReference type="NCBIfam" id="NF006828">
    <property type="entry name" value="PRK09350.1"/>
    <property type="match status" value="1"/>
</dbReference>
<dbReference type="PANTHER" id="PTHR42918:SF6">
    <property type="entry name" value="ELONGATION FACTOR P--(R)-BETA-LYSINE LIGASE"/>
    <property type="match status" value="1"/>
</dbReference>
<dbReference type="PANTHER" id="PTHR42918">
    <property type="entry name" value="LYSYL-TRNA SYNTHETASE"/>
    <property type="match status" value="1"/>
</dbReference>
<dbReference type="Pfam" id="PF00152">
    <property type="entry name" value="tRNA-synt_2"/>
    <property type="match status" value="1"/>
</dbReference>
<dbReference type="PRINTS" id="PR00982">
    <property type="entry name" value="TRNASYNTHLYS"/>
</dbReference>
<dbReference type="SUPFAM" id="SSF55681">
    <property type="entry name" value="Class II aaRS and biotin synthetases"/>
    <property type="match status" value="1"/>
</dbReference>
<dbReference type="PROSITE" id="PS50862">
    <property type="entry name" value="AA_TRNA_LIGASE_II"/>
    <property type="match status" value="1"/>
</dbReference>
<proteinExistence type="inferred from homology"/>
<organism>
    <name type="scientific">Escherichia coli (strain SMS-3-5 / SECEC)</name>
    <dbReference type="NCBI Taxonomy" id="439855"/>
    <lineage>
        <taxon>Bacteria</taxon>
        <taxon>Pseudomonadati</taxon>
        <taxon>Pseudomonadota</taxon>
        <taxon>Gammaproteobacteria</taxon>
        <taxon>Enterobacterales</taxon>
        <taxon>Enterobacteriaceae</taxon>
        <taxon>Escherichia</taxon>
    </lineage>
</organism>
<evidence type="ECO:0000255" key="1">
    <source>
        <dbReference type="HAMAP-Rule" id="MF_00174"/>
    </source>
</evidence>
<keyword id="KW-0067">ATP-binding</keyword>
<keyword id="KW-0436">Ligase</keyword>
<keyword id="KW-0547">Nucleotide-binding</keyword>